<sequence length="321" mass="36438">MSALGRNLGNFIQTFSNKTSSIKTVNGLKRGLLPCCGSTVRPIAKDNHHQSPVLNVNRSSISGIRTELFNSNGLITQFQVRQYCSESKLQVSPTPKTLLSEICQREITDFKTIFEDNNNEVDSFLEEFGFELTKEGDQALLKKTFADGTNIVIRFETLEQPIEEDFDEQDENDQNERDEDDAEEQEEDEVEEEEEEQQEEEEGENDEELTEGAEEDSHEHPFEIEVTPKGNASGKLTFGCYASHDGNYTVSGFYKGGFGETVNPVDIGGTSMEFQDNILLVLQQYGINERLSFFIHDYVHNKKINDYVESFEALKDFVSKE</sequence>
<feature type="chain" id="PRO_0000388780" description="Putative uncharacterized protein DDB_G0288137">
    <location>
        <begin position="1"/>
        <end position="321"/>
    </location>
</feature>
<feature type="region of interest" description="Disordered" evidence="2">
    <location>
        <begin position="157"/>
        <end position="220"/>
    </location>
</feature>
<feature type="coiled-coil region" evidence="1">
    <location>
        <begin position="167"/>
        <end position="212"/>
    </location>
</feature>
<feature type="compositionally biased region" description="Acidic residues" evidence="2">
    <location>
        <begin position="161"/>
        <end position="214"/>
    </location>
</feature>
<name>Y8137_DICDI</name>
<gene>
    <name type="ORF">DDB_G0288137</name>
</gene>
<reference key="1">
    <citation type="journal article" date="2005" name="Nature">
        <title>The genome of the social amoeba Dictyostelium discoideum.</title>
        <authorList>
            <person name="Eichinger L."/>
            <person name="Pachebat J.A."/>
            <person name="Gloeckner G."/>
            <person name="Rajandream M.A."/>
            <person name="Sucgang R."/>
            <person name="Berriman M."/>
            <person name="Song J."/>
            <person name="Olsen R."/>
            <person name="Szafranski K."/>
            <person name="Xu Q."/>
            <person name="Tunggal B."/>
            <person name="Kummerfeld S."/>
            <person name="Madera M."/>
            <person name="Konfortov B.A."/>
            <person name="Rivero F."/>
            <person name="Bankier A.T."/>
            <person name="Lehmann R."/>
            <person name="Hamlin N."/>
            <person name="Davies R."/>
            <person name="Gaudet P."/>
            <person name="Fey P."/>
            <person name="Pilcher K."/>
            <person name="Chen G."/>
            <person name="Saunders D."/>
            <person name="Sodergren E.J."/>
            <person name="Davis P."/>
            <person name="Kerhornou A."/>
            <person name="Nie X."/>
            <person name="Hall N."/>
            <person name="Anjard C."/>
            <person name="Hemphill L."/>
            <person name="Bason N."/>
            <person name="Farbrother P."/>
            <person name="Desany B."/>
            <person name="Just E."/>
            <person name="Morio T."/>
            <person name="Rost R."/>
            <person name="Churcher C.M."/>
            <person name="Cooper J."/>
            <person name="Haydock S."/>
            <person name="van Driessche N."/>
            <person name="Cronin A."/>
            <person name="Goodhead I."/>
            <person name="Muzny D.M."/>
            <person name="Mourier T."/>
            <person name="Pain A."/>
            <person name="Lu M."/>
            <person name="Harper D."/>
            <person name="Lindsay R."/>
            <person name="Hauser H."/>
            <person name="James K.D."/>
            <person name="Quiles M."/>
            <person name="Madan Babu M."/>
            <person name="Saito T."/>
            <person name="Buchrieser C."/>
            <person name="Wardroper A."/>
            <person name="Felder M."/>
            <person name="Thangavelu M."/>
            <person name="Johnson D."/>
            <person name="Knights A."/>
            <person name="Loulseged H."/>
            <person name="Mungall K.L."/>
            <person name="Oliver K."/>
            <person name="Price C."/>
            <person name="Quail M.A."/>
            <person name="Urushihara H."/>
            <person name="Hernandez J."/>
            <person name="Rabbinowitsch E."/>
            <person name="Steffen D."/>
            <person name="Sanders M."/>
            <person name="Ma J."/>
            <person name="Kohara Y."/>
            <person name="Sharp S."/>
            <person name="Simmonds M.N."/>
            <person name="Spiegler S."/>
            <person name="Tivey A."/>
            <person name="Sugano S."/>
            <person name="White B."/>
            <person name="Walker D."/>
            <person name="Woodward J.R."/>
            <person name="Winckler T."/>
            <person name="Tanaka Y."/>
            <person name="Shaulsky G."/>
            <person name="Schleicher M."/>
            <person name="Weinstock G.M."/>
            <person name="Rosenthal A."/>
            <person name="Cox E.C."/>
            <person name="Chisholm R.L."/>
            <person name="Gibbs R.A."/>
            <person name="Loomis W.F."/>
            <person name="Platzer M."/>
            <person name="Kay R.R."/>
            <person name="Williams J.G."/>
            <person name="Dear P.H."/>
            <person name="Noegel A.A."/>
            <person name="Barrell B.G."/>
            <person name="Kuspa A."/>
        </authorList>
    </citation>
    <scope>NUCLEOTIDE SEQUENCE [LARGE SCALE GENOMIC DNA]</scope>
    <source>
        <strain>AX4</strain>
    </source>
</reference>
<dbReference type="EMBL" id="AAFI02000109">
    <property type="protein sequence ID" value="EAL63356.1"/>
    <property type="molecule type" value="Genomic_DNA"/>
</dbReference>
<dbReference type="RefSeq" id="XP_636861.1">
    <property type="nucleotide sequence ID" value="XM_631769.1"/>
</dbReference>
<dbReference type="SMR" id="Q54JD2"/>
<dbReference type="FunCoup" id="Q54JD2">
    <property type="interactions" value="744"/>
</dbReference>
<dbReference type="GlyGen" id="Q54JD2">
    <property type="glycosylation" value="1 site"/>
</dbReference>
<dbReference type="PaxDb" id="44689-DDB0304485"/>
<dbReference type="EnsemblProtists" id="EAL63356">
    <property type="protein sequence ID" value="EAL63356"/>
    <property type="gene ID" value="DDB_G0288137"/>
</dbReference>
<dbReference type="GeneID" id="8626472"/>
<dbReference type="KEGG" id="ddi:DDB_G0288137"/>
<dbReference type="dictyBase" id="DDB_G0288137"/>
<dbReference type="VEuPathDB" id="AmoebaDB:DDB_G0288137"/>
<dbReference type="eggNOG" id="ENOG502RATH">
    <property type="taxonomic scope" value="Eukaryota"/>
</dbReference>
<dbReference type="HOGENOM" id="CLU_867210_0_0_1"/>
<dbReference type="InParanoid" id="Q54JD2"/>
<dbReference type="OMA" id="HEHPYEI"/>
<dbReference type="PRO" id="PR:Q54JD2"/>
<dbReference type="Proteomes" id="UP000002195">
    <property type="component" value="Chromosome 5"/>
</dbReference>
<dbReference type="GO" id="GO:0005759">
    <property type="term" value="C:mitochondrial matrix"/>
    <property type="evidence" value="ECO:0007669"/>
    <property type="project" value="InterPro"/>
</dbReference>
<dbReference type="GO" id="GO:0042256">
    <property type="term" value="P:cytosolic ribosome assembly"/>
    <property type="evidence" value="ECO:0000318"/>
    <property type="project" value="GO_Central"/>
</dbReference>
<dbReference type="FunFam" id="3.10.280.10:FF:000031">
    <property type="entry name" value="Putative uncharacterized protein DDB_G0288137"/>
    <property type="match status" value="1"/>
</dbReference>
<dbReference type="Gene3D" id="3.10.280.10">
    <property type="entry name" value="Mitochondrial glycoprotein"/>
    <property type="match status" value="2"/>
</dbReference>
<dbReference type="InterPro" id="IPR003428">
    <property type="entry name" value="MAM33"/>
</dbReference>
<dbReference type="InterPro" id="IPR036561">
    <property type="entry name" value="MAM33_sf"/>
</dbReference>
<dbReference type="PANTHER" id="PTHR10826">
    <property type="entry name" value="COMPLEMENT COMPONENT 1"/>
    <property type="match status" value="1"/>
</dbReference>
<dbReference type="PANTHER" id="PTHR10826:SF1">
    <property type="entry name" value="COMPLEMENT COMPONENT 1 Q SUBCOMPONENT-BINDING PROTEIN, MITOCHONDRIAL"/>
    <property type="match status" value="1"/>
</dbReference>
<dbReference type="Pfam" id="PF02330">
    <property type="entry name" value="MAM33"/>
    <property type="match status" value="1"/>
</dbReference>
<dbReference type="SUPFAM" id="SSF54529">
    <property type="entry name" value="Mitochondrial glycoprotein MAM33-like"/>
    <property type="match status" value="1"/>
</dbReference>
<proteinExistence type="predicted"/>
<protein>
    <recommendedName>
        <fullName>Putative uncharacterized protein DDB_G0288137</fullName>
    </recommendedName>
</protein>
<organism>
    <name type="scientific">Dictyostelium discoideum</name>
    <name type="common">Social amoeba</name>
    <dbReference type="NCBI Taxonomy" id="44689"/>
    <lineage>
        <taxon>Eukaryota</taxon>
        <taxon>Amoebozoa</taxon>
        <taxon>Evosea</taxon>
        <taxon>Eumycetozoa</taxon>
        <taxon>Dictyostelia</taxon>
        <taxon>Dictyosteliales</taxon>
        <taxon>Dictyosteliaceae</taxon>
        <taxon>Dictyostelium</taxon>
    </lineage>
</organism>
<keyword id="KW-0175">Coiled coil</keyword>
<keyword id="KW-1185">Reference proteome</keyword>
<evidence type="ECO:0000255" key="1"/>
<evidence type="ECO:0000256" key="2">
    <source>
        <dbReference type="SAM" id="MobiDB-lite"/>
    </source>
</evidence>
<accession>Q54JD2</accession>